<accession>A6LPQ1</accession>
<feature type="chain" id="PRO_1000086278" description="Large ribosomal subunit protein uL1">
    <location>
        <begin position="1"/>
        <end position="229"/>
    </location>
</feature>
<comment type="function">
    <text evidence="1">Binds directly to 23S rRNA. The L1 stalk is quite mobile in the ribosome, and is involved in E site tRNA release.</text>
</comment>
<comment type="function">
    <text evidence="1">Protein L1 is also a translational repressor protein, it controls the translation of the L11 operon by binding to its mRNA.</text>
</comment>
<comment type="subunit">
    <text evidence="1">Part of the 50S ribosomal subunit.</text>
</comment>
<comment type="similarity">
    <text evidence="1">Belongs to the universal ribosomal protein uL1 family.</text>
</comment>
<name>RL1_CLOB8</name>
<evidence type="ECO:0000255" key="1">
    <source>
        <dbReference type="HAMAP-Rule" id="MF_01318"/>
    </source>
</evidence>
<evidence type="ECO:0000305" key="2"/>
<sequence length="229" mass="24581">MGKKYIESAKLIDKSALYNPVEALDLTLKTAKANFDETIELHVRLGVDPRHADQQVRGAVVLPNGTGKTVRVLVFAKGDKAAEAQQAGADFVGADELVQKIQSENWFDYDVVVATPDMMGIVGRIGRVLGPKGLMPNPKSGTVTFDVAKAIEEIKAGKVEYRVDKTAIVHCPIGKKSFGTEKLKENFTALMEALVKAKPAAAKGQYLKSVSVSSTMGPSAKVNPTRALD</sequence>
<reference key="1">
    <citation type="submission" date="2007-06" db="EMBL/GenBank/DDBJ databases">
        <title>Complete sequence of Clostridium beijerinckii NCIMB 8052.</title>
        <authorList>
            <consortium name="US DOE Joint Genome Institute"/>
            <person name="Copeland A."/>
            <person name="Lucas S."/>
            <person name="Lapidus A."/>
            <person name="Barry K."/>
            <person name="Detter J.C."/>
            <person name="Glavina del Rio T."/>
            <person name="Hammon N."/>
            <person name="Israni S."/>
            <person name="Dalin E."/>
            <person name="Tice H."/>
            <person name="Pitluck S."/>
            <person name="Sims D."/>
            <person name="Brettin T."/>
            <person name="Bruce D."/>
            <person name="Tapia R."/>
            <person name="Brainard J."/>
            <person name="Schmutz J."/>
            <person name="Larimer F."/>
            <person name="Land M."/>
            <person name="Hauser L."/>
            <person name="Kyrpides N."/>
            <person name="Mikhailova N."/>
            <person name="Bennet G."/>
            <person name="Cann I."/>
            <person name="Chen J.-S."/>
            <person name="Contreras A.L."/>
            <person name="Jones D."/>
            <person name="Kashket E."/>
            <person name="Mitchell W."/>
            <person name="Stoddard S."/>
            <person name="Schwarz W."/>
            <person name="Qureshi N."/>
            <person name="Young M."/>
            <person name="Shi Z."/>
            <person name="Ezeji T."/>
            <person name="White B."/>
            <person name="Blaschek H."/>
            <person name="Richardson P."/>
        </authorList>
    </citation>
    <scope>NUCLEOTIDE SEQUENCE [LARGE SCALE GENOMIC DNA]</scope>
    <source>
        <strain>ATCC 51743 / NCIMB 8052</strain>
    </source>
</reference>
<gene>
    <name evidence="1" type="primary">rplA</name>
    <name type="ordered locus">Cbei_0141</name>
</gene>
<protein>
    <recommendedName>
        <fullName evidence="1">Large ribosomal subunit protein uL1</fullName>
    </recommendedName>
    <alternativeName>
        <fullName evidence="2">50S ribosomal protein L1</fullName>
    </alternativeName>
</protein>
<organism>
    <name type="scientific">Clostridium beijerinckii (strain ATCC 51743 / NCIMB 8052)</name>
    <name type="common">Clostridium acetobutylicum</name>
    <dbReference type="NCBI Taxonomy" id="290402"/>
    <lineage>
        <taxon>Bacteria</taxon>
        <taxon>Bacillati</taxon>
        <taxon>Bacillota</taxon>
        <taxon>Clostridia</taxon>
        <taxon>Eubacteriales</taxon>
        <taxon>Clostridiaceae</taxon>
        <taxon>Clostridium</taxon>
    </lineage>
</organism>
<dbReference type="EMBL" id="CP000721">
    <property type="protein sequence ID" value="ABR32331.1"/>
    <property type="molecule type" value="Genomic_DNA"/>
</dbReference>
<dbReference type="RefSeq" id="WP_011967503.1">
    <property type="nucleotide sequence ID" value="NC_009617.1"/>
</dbReference>
<dbReference type="SMR" id="A6LPQ1"/>
<dbReference type="KEGG" id="cbe:Cbei_0141"/>
<dbReference type="eggNOG" id="COG0081">
    <property type="taxonomic scope" value="Bacteria"/>
</dbReference>
<dbReference type="HOGENOM" id="CLU_062853_0_0_9"/>
<dbReference type="Proteomes" id="UP000000565">
    <property type="component" value="Chromosome"/>
</dbReference>
<dbReference type="GO" id="GO:0015934">
    <property type="term" value="C:large ribosomal subunit"/>
    <property type="evidence" value="ECO:0007669"/>
    <property type="project" value="InterPro"/>
</dbReference>
<dbReference type="GO" id="GO:0019843">
    <property type="term" value="F:rRNA binding"/>
    <property type="evidence" value="ECO:0007669"/>
    <property type="project" value="UniProtKB-UniRule"/>
</dbReference>
<dbReference type="GO" id="GO:0003735">
    <property type="term" value="F:structural constituent of ribosome"/>
    <property type="evidence" value="ECO:0007669"/>
    <property type="project" value="InterPro"/>
</dbReference>
<dbReference type="GO" id="GO:0000049">
    <property type="term" value="F:tRNA binding"/>
    <property type="evidence" value="ECO:0007669"/>
    <property type="project" value="UniProtKB-KW"/>
</dbReference>
<dbReference type="GO" id="GO:0006417">
    <property type="term" value="P:regulation of translation"/>
    <property type="evidence" value="ECO:0007669"/>
    <property type="project" value="UniProtKB-KW"/>
</dbReference>
<dbReference type="GO" id="GO:0006412">
    <property type="term" value="P:translation"/>
    <property type="evidence" value="ECO:0007669"/>
    <property type="project" value="UniProtKB-UniRule"/>
</dbReference>
<dbReference type="CDD" id="cd00403">
    <property type="entry name" value="Ribosomal_L1"/>
    <property type="match status" value="1"/>
</dbReference>
<dbReference type="FunFam" id="3.40.50.790:FF:000001">
    <property type="entry name" value="50S ribosomal protein L1"/>
    <property type="match status" value="1"/>
</dbReference>
<dbReference type="Gene3D" id="3.30.190.20">
    <property type="match status" value="1"/>
</dbReference>
<dbReference type="Gene3D" id="3.40.50.790">
    <property type="match status" value="1"/>
</dbReference>
<dbReference type="HAMAP" id="MF_01318_B">
    <property type="entry name" value="Ribosomal_uL1_B"/>
    <property type="match status" value="1"/>
</dbReference>
<dbReference type="InterPro" id="IPR005878">
    <property type="entry name" value="Ribosom_uL1_bac-type"/>
</dbReference>
<dbReference type="InterPro" id="IPR002143">
    <property type="entry name" value="Ribosomal_uL1"/>
</dbReference>
<dbReference type="InterPro" id="IPR023674">
    <property type="entry name" value="Ribosomal_uL1-like"/>
</dbReference>
<dbReference type="InterPro" id="IPR028364">
    <property type="entry name" value="Ribosomal_uL1/biogenesis"/>
</dbReference>
<dbReference type="InterPro" id="IPR016095">
    <property type="entry name" value="Ribosomal_uL1_3-a/b-sand"/>
</dbReference>
<dbReference type="InterPro" id="IPR023673">
    <property type="entry name" value="Ribosomal_uL1_CS"/>
</dbReference>
<dbReference type="NCBIfam" id="TIGR01169">
    <property type="entry name" value="rplA_bact"/>
    <property type="match status" value="1"/>
</dbReference>
<dbReference type="PANTHER" id="PTHR36427">
    <property type="entry name" value="54S RIBOSOMAL PROTEIN L1, MITOCHONDRIAL"/>
    <property type="match status" value="1"/>
</dbReference>
<dbReference type="PANTHER" id="PTHR36427:SF3">
    <property type="entry name" value="LARGE RIBOSOMAL SUBUNIT PROTEIN UL1M"/>
    <property type="match status" value="1"/>
</dbReference>
<dbReference type="Pfam" id="PF00687">
    <property type="entry name" value="Ribosomal_L1"/>
    <property type="match status" value="1"/>
</dbReference>
<dbReference type="PIRSF" id="PIRSF002155">
    <property type="entry name" value="Ribosomal_L1"/>
    <property type="match status" value="1"/>
</dbReference>
<dbReference type="SUPFAM" id="SSF56808">
    <property type="entry name" value="Ribosomal protein L1"/>
    <property type="match status" value="1"/>
</dbReference>
<dbReference type="PROSITE" id="PS01199">
    <property type="entry name" value="RIBOSOMAL_L1"/>
    <property type="match status" value="1"/>
</dbReference>
<keyword id="KW-0678">Repressor</keyword>
<keyword id="KW-0687">Ribonucleoprotein</keyword>
<keyword id="KW-0689">Ribosomal protein</keyword>
<keyword id="KW-0694">RNA-binding</keyword>
<keyword id="KW-0699">rRNA-binding</keyword>
<keyword id="KW-0810">Translation regulation</keyword>
<keyword id="KW-0820">tRNA-binding</keyword>
<proteinExistence type="inferred from homology"/>